<accession>Q98PZ2</accession>
<reference key="1">
    <citation type="journal article" date="2001" name="Nucleic Acids Res.">
        <title>The complete genome sequence of the murine respiratory pathogen Mycoplasma pulmonis.</title>
        <authorList>
            <person name="Chambaud I."/>
            <person name="Heilig R."/>
            <person name="Ferris S."/>
            <person name="Barbe V."/>
            <person name="Samson D."/>
            <person name="Galisson F."/>
            <person name="Moszer I."/>
            <person name="Dybvig K."/>
            <person name="Wroblewski H."/>
            <person name="Viari A."/>
            <person name="Rocha E.P.C."/>
            <person name="Blanchard A."/>
        </authorList>
    </citation>
    <scope>NUCLEOTIDE SEQUENCE [LARGE SCALE GENOMIC DNA]</scope>
    <source>
        <strain>UAB CTIP</strain>
    </source>
</reference>
<dbReference type="EMBL" id="AL445565">
    <property type="protein sequence ID" value="CAC13750.1"/>
    <property type="molecule type" value="Genomic_DNA"/>
</dbReference>
<dbReference type="PIR" id="A99584">
    <property type="entry name" value="A99584"/>
</dbReference>
<dbReference type="RefSeq" id="WP_010925378.1">
    <property type="nucleotide sequence ID" value="NC_002771.1"/>
</dbReference>
<dbReference type="SMR" id="Q98PZ2"/>
<dbReference type="STRING" id="272635.gene:17577184"/>
<dbReference type="KEGG" id="mpu:MYPU_5770"/>
<dbReference type="eggNOG" id="COG0093">
    <property type="taxonomic scope" value="Bacteria"/>
</dbReference>
<dbReference type="HOGENOM" id="CLU_095071_2_1_14"/>
<dbReference type="BioCyc" id="MPUL272635:G1GT6-590-MONOMER"/>
<dbReference type="Proteomes" id="UP000000528">
    <property type="component" value="Chromosome"/>
</dbReference>
<dbReference type="GO" id="GO:0022625">
    <property type="term" value="C:cytosolic large ribosomal subunit"/>
    <property type="evidence" value="ECO:0007669"/>
    <property type="project" value="TreeGrafter"/>
</dbReference>
<dbReference type="GO" id="GO:0070180">
    <property type="term" value="F:large ribosomal subunit rRNA binding"/>
    <property type="evidence" value="ECO:0007669"/>
    <property type="project" value="TreeGrafter"/>
</dbReference>
<dbReference type="GO" id="GO:0003735">
    <property type="term" value="F:structural constituent of ribosome"/>
    <property type="evidence" value="ECO:0007669"/>
    <property type="project" value="InterPro"/>
</dbReference>
<dbReference type="GO" id="GO:0006412">
    <property type="term" value="P:translation"/>
    <property type="evidence" value="ECO:0007669"/>
    <property type="project" value="UniProtKB-UniRule"/>
</dbReference>
<dbReference type="CDD" id="cd00337">
    <property type="entry name" value="Ribosomal_uL14"/>
    <property type="match status" value="1"/>
</dbReference>
<dbReference type="Gene3D" id="2.40.150.20">
    <property type="entry name" value="Ribosomal protein L14"/>
    <property type="match status" value="1"/>
</dbReference>
<dbReference type="HAMAP" id="MF_01367">
    <property type="entry name" value="Ribosomal_uL14"/>
    <property type="match status" value="1"/>
</dbReference>
<dbReference type="InterPro" id="IPR000218">
    <property type="entry name" value="Ribosomal_uL14"/>
</dbReference>
<dbReference type="InterPro" id="IPR005745">
    <property type="entry name" value="Ribosomal_uL14_bac-type"/>
</dbReference>
<dbReference type="InterPro" id="IPR019972">
    <property type="entry name" value="Ribosomal_uL14_CS"/>
</dbReference>
<dbReference type="InterPro" id="IPR036853">
    <property type="entry name" value="Ribosomal_uL14_sf"/>
</dbReference>
<dbReference type="NCBIfam" id="TIGR01067">
    <property type="entry name" value="rplN_bact"/>
    <property type="match status" value="1"/>
</dbReference>
<dbReference type="PANTHER" id="PTHR11761">
    <property type="entry name" value="50S/60S RIBOSOMAL PROTEIN L14/L23"/>
    <property type="match status" value="1"/>
</dbReference>
<dbReference type="PANTHER" id="PTHR11761:SF3">
    <property type="entry name" value="LARGE RIBOSOMAL SUBUNIT PROTEIN UL14M"/>
    <property type="match status" value="1"/>
</dbReference>
<dbReference type="Pfam" id="PF00238">
    <property type="entry name" value="Ribosomal_L14"/>
    <property type="match status" value="1"/>
</dbReference>
<dbReference type="SMART" id="SM01374">
    <property type="entry name" value="Ribosomal_L14"/>
    <property type="match status" value="1"/>
</dbReference>
<dbReference type="SUPFAM" id="SSF50193">
    <property type="entry name" value="Ribosomal protein L14"/>
    <property type="match status" value="1"/>
</dbReference>
<dbReference type="PROSITE" id="PS00049">
    <property type="entry name" value="RIBOSOMAL_L14"/>
    <property type="match status" value="1"/>
</dbReference>
<evidence type="ECO:0000255" key="1">
    <source>
        <dbReference type="HAMAP-Rule" id="MF_01367"/>
    </source>
</evidence>
<evidence type="ECO:0000305" key="2"/>
<gene>
    <name evidence="1" type="primary">rplN</name>
    <name type="ordered locus">MYPU_5770</name>
</gene>
<keyword id="KW-1185">Reference proteome</keyword>
<keyword id="KW-0687">Ribonucleoprotein</keyword>
<keyword id="KW-0689">Ribosomal protein</keyword>
<keyword id="KW-0694">RNA-binding</keyword>
<keyword id="KW-0699">rRNA-binding</keyword>
<comment type="function">
    <text evidence="1">Binds to 23S rRNA. Forms part of two intersubunit bridges in the 70S ribosome.</text>
</comment>
<comment type="subunit">
    <text evidence="1">Part of the 50S ribosomal subunit. Forms a cluster with proteins L3 and L19. In the 70S ribosome, L14 and L19 interact and together make contacts with the 16S rRNA in bridges B5 and B8.</text>
</comment>
<comment type="similarity">
    <text evidence="1">Belongs to the universal ribosomal protein uL14 family.</text>
</comment>
<feature type="chain" id="PRO_0000355824" description="Large ribosomal subunit protein uL14">
    <location>
        <begin position="1"/>
        <end position="122"/>
    </location>
</feature>
<proteinExistence type="inferred from homology"/>
<sequence>MLQELSVAKVADNSGAKEVGIIRNLGGSVKKSSNIGDVVICSVKKAIPNGIVKKGQVVKAVIVRTKYGIKRENGQHVSFDDNAVVIIKEDKSPRGTRVFGPVARELREKGYLKIVSLAPEVL</sequence>
<name>RL14_MYCPU</name>
<organism>
    <name type="scientific">Mycoplasmopsis pulmonis (strain UAB CTIP)</name>
    <name type="common">Mycoplasma pulmonis</name>
    <dbReference type="NCBI Taxonomy" id="272635"/>
    <lineage>
        <taxon>Bacteria</taxon>
        <taxon>Bacillati</taxon>
        <taxon>Mycoplasmatota</taxon>
        <taxon>Mycoplasmoidales</taxon>
        <taxon>Metamycoplasmataceae</taxon>
        <taxon>Mycoplasmopsis</taxon>
    </lineage>
</organism>
<protein>
    <recommendedName>
        <fullName evidence="1">Large ribosomal subunit protein uL14</fullName>
    </recommendedName>
    <alternativeName>
        <fullName evidence="2">50S ribosomal protein L14</fullName>
    </alternativeName>
</protein>